<name>RS18_SACD2</name>
<sequence length="75" mass="8732">MARFFRRRKFCRFTAEGVKSIDYKDLDTLKAYVSETGKIVPSRITGTKAKYQRQLATAIKRARFIALLPYTDSHE</sequence>
<comment type="function">
    <text evidence="1">Binds as a heterodimer with protein bS6 to the central domain of the 16S rRNA, where it helps stabilize the platform of the 30S subunit.</text>
</comment>
<comment type="subunit">
    <text evidence="1">Part of the 30S ribosomal subunit. Forms a tight heterodimer with protein bS6.</text>
</comment>
<comment type="similarity">
    <text evidence="1">Belongs to the bacterial ribosomal protein bS18 family.</text>
</comment>
<reference key="1">
    <citation type="journal article" date="2008" name="PLoS Genet.">
        <title>Complete genome sequence of the complex carbohydrate-degrading marine bacterium, Saccharophagus degradans strain 2-40 T.</title>
        <authorList>
            <person name="Weiner R.M."/>
            <person name="Taylor L.E. II"/>
            <person name="Henrissat B."/>
            <person name="Hauser L."/>
            <person name="Land M."/>
            <person name="Coutinho P.M."/>
            <person name="Rancurel C."/>
            <person name="Saunders E.H."/>
            <person name="Longmire A.G."/>
            <person name="Zhang H."/>
            <person name="Bayer E.A."/>
            <person name="Gilbert H.J."/>
            <person name="Larimer F."/>
            <person name="Zhulin I.B."/>
            <person name="Ekborg N.A."/>
            <person name="Lamed R."/>
            <person name="Richardson P.M."/>
            <person name="Borovok I."/>
            <person name="Hutcheson S."/>
        </authorList>
    </citation>
    <scope>NUCLEOTIDE SEQUENCE [LARGE SCALE GENOMIC DNA]</scope>
    <source>
        <strain>2-40 / ATCC 43961 / DSM 17024</strain>
    </source>
</reference>
<keyword id="KW-1185">Reference proteome</keyword>
<keyword id="KW-0687">Ribonucleoprotein</keyword>
<keyword id="KW-0689">Ribosomal protein</keyword>
<keyword id="KW-0694">RNA-binding</keyword>
<keyword id="KW-0699">rRNA-binding</keyword>
<feature type="chain" id="PRO_1000003596" description="Small ribosomal subunit protein bS18">
    <location>
        <begin position="1"/>
        <end position="75"/>
    </location>
</feature>
<gene>
    <name evidence="1" type="primary">rpsR</name>
    <name type="ordered locus">Sde_1058</name>
</gene>
<evidence type="ECO:0000255" key="1">
    <source>
        <dbReference type="HAMAP-Rule" id="MF_00270"/>
    </source>
</evidence>
<evidence type="ECO:0000305" key="2"/>
<protein>
    <recommendedName>
        <fullName evidence="1">Small ribosomal subunit protein bS18</fullName>
    </recommendedName>
    <alternativeName>
        <fullName evidence="2">30S ribosomal protein S18</fullName>
    </alternativeName>
</protein>
<proteinExistence type="inferred from homology"/>
<dbReference type="EMBL" id="CP000282">
    <property type="protein sequence ID" value="ABD80320.1"/>
    <property type="molecule type" value="Genomic_DNA"/>
</dbReference>
<dbReference type="RefSeq" id="WP_011467540.1">
    <property type="nucleotide sequence ID" value="NC_007912.1"/>
</dbReference>
<dbReference type="SMR" id="Q21LV9"/>
<dbReference type="STRING" id="203122.Sde_1058"/>
<dbReference type="GeneID" id="98612738"/>
<dbReference type="KEGG" id="sde:Sde_1058"/>
<dbReference type="eggNOG" id="COG0238">
    <property type="taxonomic scope" value="Bacteria"/>
</dbReference>
<dbReference type="HOGENOM" id="CLU_148710_2_3_6"/>
<dbReference type="OrthoDB" id="9812008at2"/>
<dbReference type="Proteomes" id="UP000001947">
    <property type="component" value="Chromosome"/>
</dbReference>
<dbReference type="GO" id="GO:0022627">
    <property type="term" value="C:cytosolic small ribosomal subunit"/>
    <property type="evidence" value="ECO:0007669"/>
    <property type="project" value="TreeGrafter"/>
</dbReference>
<dbReference type="GO" id="GO:0070181">
    <property type="term" value="F:small ribosomal subunit rRNA binding"/>
    <property type="evidence" value="ECO:0007669"/>
    <property type="project" value="TreeGrafter"/>
</dbReference>
<dbReference type="GO" id="GO:0003735">
    <property type="term" value="F:structural constituent of ribosome"/>
    <property type="evidence" value="ECO:0007669"/>
    <property type="project" value="InterPro"/>
</dbReference>
<dbReference type="GO" id="GO:0006412">
    <property type="term" value="P:translation"/>
    <property type="evidence" value="ECO:0007669"/>
    <property type="project" value="UniProtKB-UniRule"/>
</dbReference>
<dbReference type="FunFam" id="4.10.640.10:FF:000001">
    <property type="entry name" value="30S ribosomal protein S18"/>
    <property type="match status" value="1"/>
</dbReference>
<dbReference type="Gene3D" id="4.10.640.10">
    <property type="entry name" value="Ribosomal protein S18"/>
    <property type="match status" value="1"/>
</dbReference>
<dbReference type="HAMAP" id="MF_00270">
    <property type="entry name" value="Ribosomal_bS18"/>
    <property type="match status" value="1"/>
</dbReference>
<dbReference type="InterPro" id="IPR001648">
    <property type="entry name" value="Ribosomal_bS18"/>
</dbReference>
<dbReference type="InterPro" id="IPR018275">
    <property type="entry name" value="Ribosomal_bS18_CS"/>
</dbReference>
<dbReference type="InterPro" id="IPR036870">
    <property type="entry name" value="Ribosomal_bS18_sf"/>
</dbReference>
<dbReference type="NCBIfam" id="TIGR00165">
    <property type="entry name" value="S18"/>
    <property type="match status" value="1"/>
</dbReference>
<dbReference type="PANTHER" id="PTHR13479">
    <property type="entry name" value="30S RIBOSOMAL PROTEIN S18"/>
    <property type="match status" value="1"/>
</dbReference>
<dbReference type="PANTHER" id="PTHR13479:SF40">
    <property type="entry name" value="SMALL RIBOSOMAL SUBUNIT PROTEIN BS18M"/>
    <property type="match status" value="1"/>
</dbReference>
<dbReference type="Pfam" id="PF01084">
    <property type="entry name" value="Ribosomal_S18"/>
    <property type="match status" value="1"/>
</dbReference>
<dbReference type="PRINTS" id="PR00974">
    <property type="entry name" value="RIBOSOMALS18"/>
</dbReference>
<dbReference type="SUPFAM" id="SSF46911">
    <property type="entry name" value="Ribosomal protein S18"/>
    <property type="match status" value="1"/>
</dbReference>
<dbReference type="PROSITE" id="PS00057">
    <property type="entry name" value="RIBOSOMAL_S18"/>
    <property type="match status" value="1"/>
</dbReference>
<organism>
    <name type="scientific">Saccharophagus degradans (strain 2-40 / ATCC 43961 / DSM 17024)</name>
    <dbReference type="NCBI Taxonomy" id="203122"/>
    <lineage>
        <taxon>Bacteria</taxon>
        <taxon>Pseudomonadati</taxon>
        <taxon>Pseudomonadota</taxon>
        <taxon>Gammaproteobacteria</taxon>
        <taxon>Cellvibrionales</taxon>
        <taxon>Cellvibrionaceae</taxon>
        <taxon>Saccharophagus</taxon>
    </lineage>
</organism>
<accession>Q21LV9</accession>